<evidence type="ECO:0000255" key="1">
    <source>
        <dbReference type="HAMAP-Rule" id="MF_00636"/>
    </source>
</evidence>
<comment type="function">
    <text evidence="1">Displays ATPase and GTPase activities.</text>
</comment>
<comment type="similarity">
    <text evidence="1">Belongs to the RapZ-like family.</text>
</comment>
<dbReference type="EMBL" id="CP000227">
    <property type="protein sequence ID" value="ACM15376.1"/>
    <property type="molecule type" value="Genomic_DNA"/>
</dbReference>
<dbReference type="SMR" id="B9J4Q9"/>
<dbReference type="KEGG" id="bcq:BCQ_4976"/>
<dbReference type="HOGENOM" id="CLU_059558_0_0_9"/>
<dbReference type="Proteomes" id="UP000000441">
    <property type="component" value="Chromosome"/>
</dbReference>
<dbReference type="GO" id="GO:0005524">
    <property type="term" value="F:ATP binding"/>
    <property type="evidence" value="ECO:0007669"/>
    <property type="project" value="UniProtKB-UniRule"/>
</dbReference>
<dbReference type="GO" id="GO:0005525">
    <property type="term" value="F:GTP binding"/>
    <property type="evidence" value="ECO:0007669"/>
    <property type="project" value="UniProtKB-UniRule"/>
</dbReference>
<dbReference type="Gene3D" id="3.40.50.300">
    <property type="entry name" value="P-loop containing nucleotide triphosphate hydrolases"/>
    <property type="match status" value="1"/>
</dbReference>
<dbReference type="HAMAP" id="MF_00636">
    <property type="entry name" value="RapZ_like"/>
    <property type="match status" value="1"/>
</dbReference>
<dbReference type="InterPro" id="IPR027417">
    <property type="entry name" value="P-loop_NTPase"/>
</dbReference>
<dbReference type="InterPro" id="IPR005337">
    <property type="entry name" value="RapZ-like"/>
</dbReference>
<dbReference type="InterPro" id="IPR053930">
    <property type="entry name" value="RapZ-like_N"/>
</dbReference>
<dbReference type="InterPro" id="IPR053931">
    <property type="entry name" value="RapZ_C"/>
</dbReference>
<dbReference type="NCBIfam" id="NF003828">
    <property type="entry name" value="PRK05416.1"/>
    <property type="match status" value="1"/>
</dbReference>
<dbReference type="PANTHER" id="PTHR30448">
    <property type="entry name" value="RNASE ADAPTER PROTEIN RAPZ"/>
    <property type="match status" value="1"/>
</dbReference>
<dbReference type="PANTHER" id="PTHR30448:SF0">
    <property type="entry name" value="RNASE ADAPTER PROTEIN RAPZ"/>
    <property type="match status" value="1"/>
</dbReference>
<dbReference type="Pfam" id="PF22740">
    <property type="entry name" value="PapZ_C"/>
    <property type="match status" value="1"/>
</dbReference>
<dbReference type="Pfam" id="PF03668">
    <property type="entry name" value="RapZ-like_N"/>
    <property type="match status" value="1"/>
</dbReference>
<dbReference type="PIRSF" id="PIRSF005052">
    <property type="entry name" value="P-loopkin"/>
    <property type="match status" value="1"/>
</dbReference>
<dbReference type="SUPFAM" id="SSF52540">
    <property type="entry name" value="P-loop containing nucleoside triphosphate hydrolases"/>
    <property type="match status" value="1"/>
</dbReference>
<protein>
    <recommendedName>
        <fullName evidence="1">Nucleotide-binding protein BCQ_4976</fullName>
    </recommendedName>
</protein>
<keyword id="KW-0067">ATP-binding</keyword>
<keyword id="KW-0342">GTP-binding</keyword>
<keyword id="KW-0547">Nucleotide-binding</keyword>
<feature type="chain" id="PRO_1000147353" description="Nucleotide-binding protein BCQ_4976">
    <location>
        <begin position="1"/>
        <end position="293"/>
    </location>
</feature>
<feature type="binding site" evidence="1">
    <location>
        <begin position="14"/>
        <end position="21"/>
    </location>
    <ligand>
        <name>ATP</name>
        <dbReference type="ChEBI" id="CHEBI:30616"/>
    </ligand>
</feature>
<feature type="binding site" evidence="1">
    <location>
        <begin position="65"/>
        <end position="68"/>
    </location>
    <ligand>
        <name>GTP</name>
        <dbReference type="ChEBI" id="CHEBI:37565"/>
    </ligand>
</feature>
<accession>B9J4Q9</accession>
<name>Y4976_BACCQ</name>
<gene>
    <name type="ordered locus">BCQ_4976</name>
</gene>
<proteinExistence type="inferred from homology"/>
<sequence length="293" mass="33518">MTENNDIKMVIITGMSGAGKTVALQSFEDLGYFCVDNLPPMLLPKFIELMADSKGKMNKVALGIDLRGREFFEHLWEALDDLSERTWIIPHILFLDAKDSTLVTRYKETRRSHPLAPTGLPLKGIEAERNLLTDMKARANIVLDTSDLKPKELREKIVHLFSTETEQAFRVNVMSFGFKYGIPIDADLVFDVRFLPNPYYIPHMKPLTGLDEEVSSYVLKFNETHKFLEKLTDLITFMLPHYKREGKSQLVIAIGCTGGQHRSVTLTEYLGKHLKPEYSVHVSHRDVEKRKGH</sequence>
<organism>
    <name type="scientific">Bacillus cereus (strain Q1)</name>
    <dbReference type="NCBI Taxonomy" id="361100"/>
    <lineage>
        <taxon>Bacteria</taxon>
        <taxon>Bacillati</taxon>
        <taxon>Bacillota</taxon>
        <taxon>Bacilli</taxon>
        <taxon>Bacillales</taxon>
        <taxon>Bacillaceae</taxon>
        <taxon>Bacillus</taxon>
        <taxon>Bacillus cereus group</taxon>
    </lineage>
</organism>
<reference key="1">
    <citation type="journal article" date="2009" name="J. Bacteriol.">
        <title>Complete genome sequence of the extremophilic Bacillus cereus strain Q1 with industrial applications.</title>
        <authorList>
            <person name="Xiong Z."/>
            <person name="Jiang Y."/>
            <person name="Qi D."/>
            <person name="Lu H."/>
            <person name="Yang F."/>
            <person name="Yang J."/>
            <person name="Chen L."/>
            <person name="Sun L."/>
            <person name="Xu X."/>
            <person name="Xue Y."/>
            <person name="Zhu Y."/>
            <person name="Jin Q."/>
        </authorList>
    </citation>
    <scope>NUCLEOTIDE SEQUENCE [LARGE SCALE GENOMIC DNA]</scope>
    <source>
        <strain>Q1</strain>
    </source>
</reference>